<sequence>MSNYNNKHHDDGNPFYNEPINTSPTQQQQQQQQNLFPNTNIDYNDYTQNRGQQQQQQPAYQPDLQFQSFSHDVDVNSNTSPNNNNNNNSNNNNSNKIGGNSSNNKFSDNVPLNTNEDGTEKKYSFYEVPYYRFLFNVDTKEVGLRLIRSMLPIKFSFFNLIRENPDLYGPFWVLTSLVFIVAVTSNLNEYFHSSDHKSWEVDIQKIVYSAITIYGYSFVIPLILWGIFKWMNLGLRLLDMLCIYGYTLFIFVPASILCVIPLQLVQWIIVAIASIVSGLFLVTNIFTPLKEDFTKRGLIICAVIGALHIGLALVLKLYFFANSTENFTISDSSSTPTPTPTNTTKLL</sequence>
<gene>
    <name type="primary">yipf1</name>
    <name type="ORF">DDB_G0281587</name>
</gene>
<keyword id="KW-0025">Alternative splicing</keyword>
<keyword id="KW-0967">Endosome</keyword>
<keyword id="KW-0325">Glycoprotein</keyword>
<keyword id="KW-0333">Golgi apparatus</keyword>
<keyword id="KW-0472">Membrane</keyword>
<keyword id="KW-1185">Reference proteome</keyword>
<keyword id="KW-0812">Transmembrane</keyword>
<keyword id="KW-1133">Transmembrane helix</keyword>
<reference key="1">
    <citation type="journal article" date="2005" name="Nature">
        <title>The genome of the social amoeba Dictyostelium discoideum.</title>
        <authorList>
            <person name="Eichinger L."/>
            <person name="Pachebat J.A."/>
            <person name="Gloeckner G."/>
            <person name="Rajandream M.A."/>
            <person name="Sucgang R."/>
            <person name="Berriman M."/>
            <person name="Song J."/>
            <person name="Olsen R."/>
            <person name="Szafranski K."/>
            <person name="Xu Q."/>
            <person name="Tunggal B."/>
            <person name="Kummerfeld S."/>
            <person name="Madera M."/>
            <person name="Konfortov B.A."/>
            <person name="Rivero F."/>
            <person name="Bankier A.T."/>
            <person name="Lehmann R."/>
            <person name="Hamlin N."/>
            <person name="Davies R."/>
            <person name="Gaudet P."/>
            <person name="Fey P."/>
            <person name="Pilcher K."/>
            <person name="Chen G."/>
            <person name="Saunders D."/>
            <person name="Sodergren E.J."/>
            <person name="Davis P."/>
            <person name="Kerhornou A."/>
            <person name="Nie X."/>
            <person name="Hall N."/>
            <person name="Anjard C."/>
            <person name="Hemphill L."/>
            <person name="Bason N."/>
            <person name="Farbrother P."/>
            <person name="Desany B."/>
            <person name="Just E."/>
            <person name="Morio T."/>
            <person name="Rost R."/>
            <person name="Churcher C.M."/>
            <person name="Cooper J."/>
            <person name="Haydock S."/>
            <person name="van Driessche N."/>
            <person name="Cronin A."/>
            <person name="Goodhead I."/>
            <person name="Muzny D.M."/>
            <person name="Mourier T."/>
            <person name="Pain A."/>
            <person name="Lu M."/>
            <person name="Harper D."/>
            <person name="Lindsay R."/>
            <person name="Hauser H."/>
            <person name="James K.D."/>
            <person name="Quiles M."/>
            <person name="Madan Babu M."/>
            <person name="Saito T."/>
            <person name="Buchrieser C."/>
            <person name="Wardroper A."/>
            <person name="Felder M."/>
            <person name="Thangavelu M."/>
            <person name="Johnson D."/>
            <person name="Knights A."/>
            <person name="Loulseged H."/>
            <person name="Mungall K.L."/>
            <person name="Oliver K."/>
            <person name="Price C."/>
            <person name="Quail M.A."/>
            <person name="Urushihara H."/>
            <person name="Hernandez J."/>
            <person name="Rabbinowitsch E."/>
            <person name="Steffen D."/>
            <person name="Sanders M."/>
            <person name="Ma J."/>
            <person name="Kohara Y."/>
            <person name="Sharp S."/>
            <person name="Simmonds M.N."/>
            <person name="Spiegler S."/>
            <person name="Tivey A."/>
            <person name="Sugano S."/>
            <person name="White B."/>
            <person name="Walker D."/>
            <person name="Woodward J.R."/>
            <person name="Winckler T."/>
            <person name="Tanaka Y."/>
            <person name="Shaulsky G."/>
            <person name="Schleicher M."/>
            <person name="Weinstock G.M."/>
            <person name="Rosenthal A."/>
            <person name="Cox E.C."/>
            <person name="Chisholm R.L."/>
            <person name="Gibbs R.A."/>
            <person name="Loomis W.F."/>
            <person name="Platzer M."/>
            <person name="Kay R.R."/>
            <person name="Williams J.G."/>
            <person name="Dear P.H."/>
            <person name="Noegel A.A."/>
            <person name="Barrell B.G."/>
            <person name="Kuspa A."/>
        </authorList>
    </citation>
    <scope>NUCLEOTIDE SEQUENCE [LARGE SCALE GENOMIC DNA]</scope>
    <source>
        <strain>AX4</strain>
    </source>
</reference>
<name>YIPF1_DICDI</name>
<comment type="subcellular location">
    <subcellularLocation>
        <location evidence="1">Golgi apparatus</location>
        <location evidence="1">cis-Golgi network membrane</location>
        <topology evidence="1">Multi-pass membrane protein</topology>
    </subcellularLocation>
    <subcellularLocation>
        <location evidence="1">Golgi apparatus</location>
        <location evidence="1">trans-Golgi network membrane</location>
    </subcellularLocation>
    <subcellularLocation>
        <location evidence="1">Late endosome membrane</location>
    </subcellularLocation>
    <text evidence="1">Mainly localizes within medial-/trans-Golgi and trans-Golgi network (TGN), while less so within cis-Golgi.</text>
</comment>
<comment type="alternative products">
    <event type="alternative splicing"/>
    <isoform>
        <id>Q54TS4-1</id>
        <name>1</name>
        <sequence type="displayed"/>
    </isoform>
    <isoform>
        <id>Q54TS4-2</id>
        <name>2</name>
        <sequence type="described" ref="VSP_033033"/>
    </isoform>
</comment>
<comment type="similarity">
    <text evidence="4">Belongs to the YIP1 family.</text>
</comment>
<organism>
    <name type="scientific">Dictyostelium discoideum</name>
    <name type="common">Social amoeba</name>
    <dbReference type="NCBI Taxonomy" id="44689"/>
    <lineage>
        <taxon>Eukaryota</taxon>
        <taxon>Amoebozoa</taxon>
        <taxon>Evosea</taxon>
        <taxon>Eumycetozoa</taxon>
        <taxon>Dictyostelia</taxon>
        <taxon>Dictyosteliales</taxon>
        <taxon>Dictyosteliaceae</taxon>
        <taxon>Dictyostelium</taxon>
    </lineage>
</organism>
<evidence type="ECO:0000250" key="1">
    <source>
        <dbReference type="UniProtKB" id="Q9Y548"/>
    </source>
</evidence>
<evidence type="ECO:0000255" key="2"/>
<evidence type="ECO:0000256" key="3">
    <source>
        <dbReference type="SAM" id="MobiDB-lite"/>
    </source>
</evidence>
<evidence type="ECO:0000305" key="4"/>
<accession>Q54TS4</accession>
<accession>B0G137</accession>
<proteinExistence type="inferred from homology"/>
<protein>
    <recommendedName>
        <fullName>Protein YIPF1 homolog</fullName>
    </recommendedName>
</protein>
<dbReference type="EMBL" id="AAFI02000042">
    <property type="protein sequence ID" value="EAL66555.1"/>
    <property type="molecule type" value="Genomic_DNA"/>
</dbReference>
<dbReference type="EMBL" id="AAFI02000042">
    <property type="protein sequence ID" value="EDR41071.1"/>
    <property type="molecule type" value="Genomic_DNA"/>
</dbReference>
<dbReference type="RefSeq" id="XP_001732999.1">
    <property type="nucleotide sequence ID" value="XM_001732947.1"/>
</dbReference>
<dbReference type="RefSeq" id="XP_640517.1">
    <property type="nucleotide sequence ID" value="XM_635425.1"/>
</dbReference>
<dbReference type="SMR" id="Q54TS4"/>
<dbReference type="FunCoup" id="Q54TS4">
    <property type="interactions" value="503"/>
</dbReference>
<dbReference type="STRING" id="44689.Q54TS4"/>
<dbReference type="GlyCosmos" id="Q54TS4">
    <property type="glycosylation" value="3 sites, No reported glycans"/>
</dbReference>
<dbReference type="GlyGen" id="Q54TS4">
    <property type="glycosylation" value="4 sites"/>
</dbReference>
<dbReference type="PaxDb" id="44689-DDB0238114"/>
<dbReference type="EnsemblProtists" id="EAL66555">
    <property type="protein sequence ID" value="EAL66555"/>
    <property type="gene ID" value="DDB_G0281587"/>
</dbReference>
<dbReference type="EnsemblProtists" id="EDR41071">
    <property type="protein sequence ID" value="EDR41071"/>
    <property type="gene ID" value="DDB_G0281587"/>
</dbReference>
<dbReference type="GeneID" id="8623127"/>
<dbReference type="KEGG" id="ddi:DDB_G0281587"/>
<dbReference type="dictyBase" id="DDB_G0281587">
    <property type="gene designation" value="yipf1"/>
</dbReference>
<dbReference type="VEuPathDB" id="AmoebaDB:DDB_G0281587"/>
<dbReference type="eggNOG" id="KOG3114">
    <property type="taxonomic scope" value="Eukaryota"/>
</dbReference>
<dbReference type="InParanoid" id="Q54TS4"/>
<dbReference type="OMA" id="YFFDAVH"/>
<dbReference type="PhylomeDB" id="Q54TS4"/>
<dbReference type="PRO" id="PR:Q54TS4"/>
<dbReference type="Proteomes" id="UP000002195">
    <property type="component" value="Chromosome 3"/>
</dbReference>
<dbReference type="GO" id="GO:0005794">
    <property type="term" value="C:Golgi apparatus"/>
    <property type="evidence" value="ECO:0000318"/>
    <property type="project" value="GO_Central"/>
</dbReference>
<dbReference type="GO" id="GO:0031902">
    <property type="term" value="C:late endosome membrane"/>
    <property type="evidence" value="ECO:0007669"/>
    <property type="project" value="UniProtKB-SubCell"/>
</dbReference>
<dbReference type="GO" id="GO:0031267">
    <property type="term" value="F:small GTPase binding"/>
    <property type="evidence" value="ECO:0007669"/>
    <property type="project" value="InterPro"/>
</dbReference>
<dbReference type="GO" id="GO:0016192">
    <property type="term" value="P:vesicle-mediated transport"/>
    <property type="evidence" value="ECO:0007669"/>
    <property type="project" value="InterPro"/>
</dbReference>
<dbReference type="InterPro" id="IPR006977">
    <property type="entry name" value="Yip1_dom"/>
</dbReference>
<dbReference type="InterPro" id="IPR039765">
    <property type="entry name" value="Yip5/YIPF1/YIPF2"/>
</dbReference>
<dbReference type="PANTHER" id="PTHR12822">
    <property type="entry name" value="PROTEIN YIPF"/>
    <property type="match status" value="1"/>
</dbReference>
<dbReference type="PANTHER" id="PTHR12822:SF2">
    <property type="entry name" value="PROTEIN YIPF"/>
    <property type="match status" value="1"/>
</dbReference>
<dbReference type="Pfam" id="PF04893">
    <property type="entry name" value="Yip1"/>
    <property type="match status" value="1"/>
</dbReference>
<feature type="chain" id="PRO_0000330342" description="Protein YIPF1 homolog">
    <location>
        <begin position="1"/>
        <end position="347"/>
    </location>
</feature>
<feature type="topological domain" description="Cytoplasmic" evidence="1">
    <location>
        <begin position="1"/>
        <end position="166"/>
    </location>
</feature>
<feature type="transmembrane region" description="Helical" evidence="2">
    <location>
        <begin position="167"/>
        <end position="187"/>
    </location>
</feature>
<feature type="topological domain" description="Lumenal" evidence="4">
    <location>
        <begin position="188"/>
        <end position="207"/>
    </location>
</feature>
<feature type="transmembrane region" description="Helical" evidence="2">
    <location>
        <begin position="208"/>
        <end position="228"/>
    </location>
</feature>
<feature type="topological domain" description="Cytoplasmic" evidence="4">
    <location>
        <begin position="229"/>
        <end position="232"/>
    </location>
</feature>
<feature type="transmembrane region" description="Helical" evidence="2">
    <location>
        <begin position="233"/>
        <end position="253"/>
    </location>
</feature>
<feature type="topological domain" description="Lumenal" evidence="4">
    <location>
        <begin position="254"/>
        <end position="255"/>
    </location>
</feature>
<feature type="transmembrane region" description="Helical" evidence="2">
    <location>
        <begin position="256"/>
        <end position="276"/>
    </location>
</feature>
<feature type="topological domain" description="Cytoplasmic" evidence="4">
    <location>
        <begin position="277"/>
        <end position="296"/>
    </location>
</feature>
<feature type="transmembrane region" description="Helical" evidence="2">
    <location>
        <begin position="297"/>
        <end position="317"/>
    </location>
</feature>
<feature type="topological domain" description="Lumenal" evidence="1">
    <location>
        <begin position="318"/>
        <end position="347"/>
    </location>
</feature>
<feature type="region of interest" description="Disordered" evidence="3">
    <location>
        <begin position="1"/>
        <end position="115"/>
    </location>
</feature>
<feature type="compositionally biased region" description="Polar residues" evidence="3">
    <location>
        <begin position="34"/>
        <end position="47"/>
    </location>
</feature>
<feature type="compositionally biased region" description="Low complexity" evidence="3">
    <location>
        <begin position="48"/>
        <end position="67"/>
    </location>
</feature>
<feature type="compositionally biased region" description="Low complexity" evidence="3">
    <location>
        <begin position="76"/>
        <end position="104"/>
    </location>
</feature>
<feature type="compositionally biased region" description="Polar residues" evidence="3">
    <location>
        <begin position="105"/>
        <end position="115"/>
    </location>
</feature>
<feature type="glycosylation site" description="N-linked (GlcNAc...) asparagine" evidence="2">
    <location>
        <position position="322"/>
    </location>
</feature>
<feature type="glycosylation site" description="N-linked (GlcNAc...) asparagine" evidence="2">
    <location>
        <position position="326"/>
    </location>
</feature>
<feature type="glycosylation site" description="N-linked (GlcNAc...) asparagine" evidence="2">
    <location>
        <position position="342"/>
    </location>
</feature>
<feature type="splice variant" id="VSP_033033" description="In isoform 2." evidence="4">
    <original>MSNYNNKHHDDGNPFYNEPINTSPTQQQQQQQQNLFPNTNIDYNDYTQNRGQQQQQQPAYQPDLQFQS</original>
    <variation>MSTG</variation>
    <location>
        <begin position="1"/>
        <end position="68"/>
    </location>
</feature>